<keyword id="KW-0903">Direct protein sequencing</keyword>
<keyword id="KW-1015">Disulfide bond</keyword>
<keyword id="KW-1185">Reference proteome</keyword>
<keyword id="KW-0708">Seed storage protein</keyword>
<keyword id="KW-0732">Signal</keyword>
<keyword id="KW-0758">Storage protein</keyword>
<gene>
    <name type="primary">GLUA2</name>
    <name type="synonym">GLUA-2</name>
    <name type="synonym">GT1</name>
    <name type="ordered locus">Os10g0400200</name>
    <name type="ordered locus">LOC_Os10g26060</name>
    <name type="ORF">OSJNBa0050N08.16</name>
</gene>
<proteinExistence type="evidence at protein level"/>
<comment type="function">
    <text>Seed storage protein.</text>
</comment>
<comment type="subunit">
    <text>Hexamer; each subunit is composed of an acidic and a basic chain derived from a single precursor and linked by a disulfide bond.</text>
</comment>
<comment type="similarity">
    <text evidence="6">Belongs to the 11S seed storage protein (globulins) family.</text>
</comment>
<feature type="signal peptide" evidence="4">
    <location>
        <begin position="1"/>
        <end position="24"/>
    </location>
</feature>
<feature type="chain" id="PRO_0000032048" description="Glutelin type-A 2 acidic chain">
    <location>
        <begin position="25"/>
        <end position="306"/>
    </location>
</feature>
<feature type="chain" id="PRO_0000032049" description="Glutelin type-A 2 basic chain">
    <location>
        <begin position="307"/>
        <end position="499"/>
    </location>
</feature>
<feature type="domain" description="Cupin type-1 1" evidence="2">
    <location>
        <begin position="51"/>
        <end position="248"/>
    </location>
</feature>
<feature type="domain" description="Cupin type-1 2" evidence="2">
    <location>
        <begin position="319"/>
        <end position="468"/>
    </location>
</feature>
<feature type="region of interest" description="Disordered" evidence="3">
    <location>
        <begin position="280"/>
        <end position="300"/>
    </location>
</feature>
<feature type="disulfide bond" evidence="1">
    <location>
        <begin position="46"/>
        <end position="79"/>
    </location>
</feature>
<feature type="disulfide bond" description="Interchain (between acidic and basic chains)" evidence="2">
    <location>
        <begin position="122"/>
        <end position="313"/>
    </location>
</feature>
<feature type="sequence variant" evidence="5">
    <original>N</original>
    <variation>I</variation>
    <location>
        <position position="320"/>
    </location>
</feature>
<feature type="sequence variant" evidence="5">
    <original>S</original>
    <variation>T</variation>
    <location>
        <position position="342"/>
    </location>
</feature>
<feature type="sequence variant" evidence="5">
    <original>D</original>
    <variation>A</variation>
    <location>
        <position position="454"/>
    </location>
</feature>
<feature type="sequence conflict" description="In Ref. 6; ABA46747." evidence="6" ref="6">
    <original>Q</original>
    <variation>R</variation>
    <location>
        <position position="36"/>
    </location>
</feature>
<reference key="1">
    <citation type="journal article" date="1987" name="Mol. Gen. Genet.">
        <title>A rice glutelin gene family - A major type of glutelin mRNAs can be divided into two classes.</title>
        <authorList>
            <person name="Takaiwa F."/>
            <person name="Kikuchi S."/>
            <person name="Oono K."/>
        </authorList>
    </citation>
    <scope>NUCLEOTIDE SEQUENCE [MRNA]</scope>
</reference>
<reference key="2">
    <citation type="journal article" date="1987" name="FEBS Lett.">
        <title>Nucleotide sequence of a rice glutelin gene.</title>
        <authorList>
            <person name="Takaiwa F."/>
            <person name="Ebinuma H."/>
            <person name="Kikuchi S."/>
            <person name="Oono K."/>
        </authorList>
    </citation>
    <scope>NUCLEOTIDE SEQUENCE [GENOMIC DNA]</scope>
    <source>
        <strain>cv. Mangetsumochi</strain>
    </source>
</reference>
<reference key="3">
    <citation type="journal article" date="1989" name="Agric. Biol. Chem.">
        <title>Organization and primary sequence of multiple genes encoding type II mRNA species of rice prepro-glutelin.</title>
        <authorList>
            <person name="Abe K."/>
            <person name="Emori Y."/>
            <person name="Kawasaki H."/>
            <person name="Kondo H."/>
            <person name="Suzuki K."/>
            <person name="Arai S."/>
        </authorList>
    </citation>
    <scope>NUCLEOTIDE SEQUENCE [GENOMIC DNA]</scope>
    <scope>VARIANTS ILE-320; THR-342 AND ALA-454</scope>
    <source>
        <strain>cv. Nipponbare</strain>
    </source>
</reference>
<reference key="4">
    <citation type="journal article" date="1989" name="J. Biol. Chem.">
        <title>Structure and expression of the rice glutelin multigene family.</title>
        <authorList>
            <person name="Okita T.W."/>
            <person name="Hwang Y.S."/>
            <person name="Hnilo J."/>
            <person name="Kim W.T."/>
            <person name="Aryan A.P."/>
            <person name="Larson R."/>
            <person name="Krishnan H.B."/>
        </authorList>
    </citation>
    <scope>NUCLEOTIDE SEQUENCE [GENOMIC DNA]</scope>
    <source>
        <strain>cv. M201</strain>
        <tissue>Coleoptile</tissue>
    </source>
</reference>
<reference key="5">
    <citation type="submission" date="2004-03" db="EMBL/GenBank/DDBJ databases">
        <title>Nucleotide sequence of rice glutelin Gt1 gene.</title>
        <authorList>
            <person name="Liu Q.Q."/>
            <person name="Sun S.S.M."/>
        </authorList>
    </citation>
    <scope>NUCLEOTIDE SEQUENCE [GENOMIC DNA]</scope>
    <source>
        <strain>cv. Wuyunjing 8</strain>
        <tissue>Leaf</tissue>
    </source>
</reference>
<reference key="6">
    <citation type="submission" date="2005-09" db="EMBL/GenBank/DDBJ databases">
        <authorList>
            <person name="Zhang W."/>
            <person name="Yin Z.M."/>
            <person name="Lu H."/>
            <person name="Liu L.N."/>
            <person name="Li H.Q."/>
            <person name="Li J.Y."/>
        </authorList>
    </citation>
    <scope>NUCLEOTIDE SEQUENCE [GENOMIC DNA]</scope>
    <source>
        <strain>cv. Xiangqing</strain>
        <strain>cv. Zhonghua 11</strain>
        <tissue>Leaf</tissue>
    </source>
</reference>
<reference key="7">
    <citation type="journal article" date="2003" name="Science">
        <title>In-depth view of structure, activity, and evolution of rice chromosome 10.</title>
        <authorList>
            <person name="Yu Y."/>
            <person name="Rambo T."/>
            <person name="Currie J."/>
            <person name="Saski C."/>
            <person name="Kim H.-R."/>
            <person name="Collura K."/>
            <person name="Thompson S."/>
            <person name="Simmons J."/>
            <person name="Yang T.-J."/>
            <person name="Nah G."/>
            <person name="Patel A.J."/>
            <person name="Thurmond S."/>
            <person name="Henry D."/>
            <person name="Oates R."/>
            <person name="Palmer M."/>
            <person name="Pries G."/>
            <person name="Gibson J."/>
            <person name="Anderson H."/>
            <person name="Paradkar M."/>
            <person name="Crane L."/>
            <person name="Dale J."/>
            <person name="Carver M.B."/>
            <person name="Wood T."/>
            <person name="Frisch D."/>
            <person name="Engler F."/>
            <person name="Soderlund C."/>
            <person name="Palmer L.E."/>
            <person name="Teytelman L."/>
            <person name="Nascimento L."/>
            <person name="De la Bastide M."/>
            <person name="Spiegel L."/>
            <person name="Ware D."/>
            <person name="O'Shaughnessy A."/>
            <person name="Dike S."/>
            <person name="Dedhia N."/>
            <person name="Preston R."/>
            <person name="Huang E."/>
            <person name="Ferraro K."/>
            <person name="Kuit K."/>
            <person name="Miller B."/>
            <person name="Zutavern T."/>
            <person name="Katzenberger F."/>
            <person name="Muller S."/>
            <person name="Balija V."/>
            <person name="Martienssen R.A."/>
            <person name="Stein L."/>
            <person name="Minx P."/>
            <person name="Johnson D."/>
            <person name="Cordum H."/>
            <person name="Mardis E."/>
            <person name="Cheng Z."/>
            <person name="Jiang J."/>
            <person name="Wilson R."/>
            <person name="McCombie W.R."/>
            <person name="Wing R.A."/>
            <person name="Yuan Q."/>
            <person name="Ouyang S."/>
            <person name="Liu J."/>
            <person name="Jones K.M."/>
            <person name="Gansberger K."/>
            <person name="Moffat K."/>
            <person name="Hill J."/>
            <person name="Tsitrin T."/>
            <person name="Overton L."/>
            <person name="Bera J."/>
            <person name="Kim M."/>
            <person name="Jin S."/>
            <person name="Tallon L."/>
            <person name="Ciecko A."/>
            <person name="Pai G."/>
            <person name="Van Aken S."/>
            <person name="Utterback T."/>
            <person name="Reidmuller S."/>
            <person name="Bormann J."/>
            <person name="Feldblyum T."/>
            <person name="Hsiao J."/>
            <person name="Zismann V."/>
            <person name="Blunt S."/>
            <person name="de Vazeille A.R."/>
            <person name="Shaffer T."/>
            <person name="Koo H."/>
            <person name="Suh B."/>
            <person name="Yang Q."/>
            <person name="Haas B."/>
            <person name="Peterson J."/>
            <person name="Pertea M."/>
            <person name="Volfovsky N."/>
            <person name="Wortman J."/>
            <person name="White O."/>
            <person name="Salzberg S.L."/>
            <person name="Fraser C.M."/>
            <person name="Buell C.R."/>
            <person name="Messing J."/>
            <person name="Song R."/>
            <person name="Fuks G."/>
            <person name="Llaca V."/>
            <person name="Kovchak S."/>
            <person name="Young S."/>
            <person name="Bowers J.E."/>
            <person name="Paterson A.H."/>
            <person name="Johns M.A."/>
            <person name="Mao L."/>
            <person name="Pan H."/>
            <person name="Dean R.A."/>
        </authorList>
    </citation>
    <scope>NUCLEOTIDE SEQUENCE [LARGE SCALE GENOMIC DNA]</scope>
    <source>
        <strain>cv. Nipponbare</strain>
    </source>
</reference>
<reference key="8">
    <citation type="journal article" date="2005" name="Nature">
        <title>The map-based sequence of the rice genome.</title>
        <authorList>
            <consortium name="International rice genome sequencing project (IRGSP)"/>
        </authorList>
    </citation>
    <scope>NUCLEOTIDE SEQUENCE [LARGE SCALE GENOMIC DNA]</scope>
    <source>
        <strain>cv. Nipponbare</strain>
    </source>
</reference>
<reference key="9">
    <citation type="journal article" date="2008" name="Nucleic Acids Res.">
        <title>The rice annotation project database (RAP-DB): 2008 update.</title>
        <authorList>
            <consortium name="The rice annotation project (RAP)"/>
        </authorList>
    </citation>
    <scope>GENOME REANNOTATION</scope>
    <source>
        <strain>cv. Nipponbare</strain>
    </source>
</reference>
<reference key="10">
    <citation type="journal article" date="2013" name="Rice">
        <title>Improvement of the Oryza sativa Nipponbare reference genome using next generation sequence and optical map data.</title>
        <authorList>
            <person name="Kawahara Y."/>
            <person name="de la Bastide M."/>
            <person name="Hamilton J.P."/>
            <person name="Kanamori H."/>
            <person name="McCombie W.R."/>
            <person name="Ouyang S."/>
            <person name="Schwartz D.C."/>
            <person name="Tanaka T."/>
            <person name="Wu J."/>
            <person name="Zhou S."/>
            <person name="Childs K.L."/>
            <person name="Davidson R.M."/>
            <person name="Lin H."/>
            <person name="Quesada-Ocampo L."/>
            <person name="Vaillancourt B."/>
            <person name="Sakai H."/>
            <person name="Lee S.S."/>
            <person name="Kim J."/>
            <person name="Numa H."/>
            <person name="Itoh T."/>
            <person name="Buell C.R."/>
            <person name="Matsumoto T."/>
        </authorList>
    </citation>
    <scope>GENOME REANNOTATION</scope>
    <source>
        <strain>cv. Nipponbare</strain>
    </source>
</reference>
<reference key="11">
    <citation type="journal article" date="1987" name="FEBS Lett.">
        <title>Heterogeneity in cDNA clones encoding rice glutelin.</title>
        <authorList>
            <person name="Wang C.S."/>
            <person name="Shastri K."/>
            <person name="Wen L."/>
            <person name="Huang J.K."/>
            <person name="Sonthayanon B."/>
            <person name="Muthukrishnan S."/>
            <person name="Reeck G.R."/>
        </authorList>
    </citation>
    <scope>NUCLEOTIDE SEQUENCE [MRNA] OF 274-499</scope>
    <source>
        <strain>cv. Newbonnet</strain>
    </source>
</reference>
<reference key="12">
    <citation type="journal article" date="2004" name="Nucleic Acids Res.">
        <title>Rice proteome database based on two-dimensional polyacrylamide gel electrophoresis: its status in 2003.</title>
        <authorList>
            <person name="Komatsu S."/>
            <person name="Kojima K."/>
            <person name="Suzuki K."/>
            <person name="Ozaki K."/>
            <person name="Higo K."/>
        </authorList>
    </citation>
    <scope>PROTEIN SEQUENCE OF 25-40; 76-90; 125-140 AND 141-150</scope>
    <source>
        <strain>cv. Nipponbare</strain>
        <tissue>Endosperm</tissue>
        <tissue>Panicle</tissue>
    </source>
</reference>
<organism>
    <name type="scientific">Oryza sativa subsp. japonica</name>
    <name type="common">Rice</name>
    <dbReference type="NCBI Taxonomy" id="39947"/>
    <lineage>
        <taxon>Eukaryota</taxon>
        <taxon>Viridiplantae</taxon>
        <taxon>Streptophyta</taxon>
        <taxon>Embryophyta</taxon>
        <taxon>Tracheophyta</taxon>
        <taxon>Spermatophyta</taxon>
        <taxon>Magnoliopsida</taxon>
        <taxon>Liliopsida</taxon>
        <taxon>Poales</taxon>
        <taxon>Poaceae</taxon>
        <taxon>BOP clade</taxon>
        <taxon>Oryzoideae</taxon>
        <taxon>Oryzeae</taxon>
        <taxon>Oryzinae</taxon>
        <taxon>Oryza</taxon>
        <taxon>Oryza sativa</taxon>
    </lineage>
</organism>
<name>GLUA2_ORYSJ</name>
<accession>P07730</accession>
<accession>P07731</accession>
<accession>Q0IXU2</accession>
<accession>Q3HR07</accession>
<accession>Q7G2V6</accession>
<accession>Q7G8K6</accession>
<protein>
    <recommendedName>
        <fullName>Glutelin type-A 2</fullName>
    </recommendedName>
    <alternativeName>
        <fullName>Glutelin type II</fullName>
    </alternativeName>
    <component>
        <recommendedName>
            <fullName>Glutelin type-A 2 acidic chain</fullName>
        </recommendedName>
    </component>
    <component>
        <recommendedName>
            <fullName>Glutelin type-A 2 basic chain</fullName>
        </recommendedName>
    </component>
</protein>
<dbReference type="EMBL" id="X05663">
    <property type="protein sequence ID" value="CAA29151.1"/>
    <property type="molecule type" value="mRNA"/>
</dbReference>
<dbReference type="EMBL" id="X05664">
    <property type="protein sequence ID" value="CAA29152.1"/>
    <property type="molecule type" value="mRNA"/>
</dbReference>
<dbReference type="EMBL" id="D00584">
    <property type="protein sequence ID" value="BAA00462.1"/>
    <property type="molecule type" value="Genomic_DNA"/>
</dbReference>
<dbReference type="EMBL" id="Y00687">
    <property type="protein sequence ID" value="CAA68683.1"/>
    <property type="molecule type" value="Genomic_DNA"/>
</dbReference>
<dbReference type="EMBL" id="M28156">
    <property type="protein sequence ID" value="AAA50315.1"/>
    <property type="molecule type" value="Genomic_DNA"/>
</dbReference>
<dbReference type="EMBL" id="AY585231">
    <property type="protein sequence ID" value="AAS98732.1"/>
    <property type="molecule type" value="Genomic_DNA"/>
</dbReference>
<dbReference type="EMBL" id="DQ195678">
    <property type="protein sequence ID" value="ABA39424.1"/>
    <property type="molecule type" value="Genomic_DNA"/>
</dbReference>
<dbReference type="EMBL" id="DQ203186">
    <property type="protein sequence ID" value="ABA46747.1"/>
    <property type="molecule type" value="Genomic_DNA"/>
</dbReference>
<dbReference type="EMBL" id="AC021891">
    <property type="protein sequence ID" value="AAK50415.1"/>
    <property type="molecule type" value="Genomic_DNA"/>
</dbReference>
<dbReference type="EMBL" id="DP000086">
    <property type="protein sequence ID" value="AAP53644.1"/>
    <property type="molecule type" value="Genomic_DNA"/>
</dbReference>
<dbReference type="EMBL" id="AP008216">
    <property type="protein sequence ID" value="BAF26456.1"/>
    <property type="molecule type" value="Genomic_DNA"/>
</dbReference>
<dbReference type="EMBL" id="AP014966">
    <property type="protein sequence ID" value="BAT10732.1"/>
    <property type="molecule type" value="Genomic_DNA"/>
</dbReference>
<dbReference type="EMBL" id="X06149">
    <property type="protein sequence ID" value="CAA29507.1"/>
    <property type="molecule type" value="mRNA"/>
</dbReference>
<dbReference type="PIR" id="A34332">
    <property type="entry name" value="A34332"/>
</dbReference>
<dbReference type="PIR" id="JQ0112">
    <property type="entry name" value="FWRZ2"/>
</dbReference>
<dbReference type="RefSeq" id="XP_015614159.1">
    <property type="nucleotide sequence ID" value="XM_015758673.1"/>
</dbReference>
<dbReference type="SMR" id="P07730"/>
<dbReference type="FunCoup" id="P07730">
    <property type="interactions" value="1784"/>
</dbReference>
<dbReference type="STRING" id="39947.P07730"/>
<dbReference type="PaxDb" id="39947-P07730"/>
<dbReference type="EnsemblPlants" id="Os10t0400200-01">
    <property type="protein sequence ID" value="Os10t0400200-01"/>
    <property type="gene ID" value="Os10g0400200"/>
</dbReference>
<dbReference type="Gramene" id="Os10t0400200-01">
    <property type="protein sequence ID" value="Os10t0400200-01"/>
    <property type="gene ID" value="Os10g0400200"/>
</dbReference>
<dbReference type="KEGG" id="dosa:Os10g0400200"/>
<dbReference type="eggNOG" id="ENOG502QU1J">
    <property type="taxonomic scope" value="Eukaryota"/>
</dbReference>
<dbReference type="HOGENOM" id="CLU_026341_2_0_1"/>
<dbReference type="InParanoid" id="P07730"/>
<dbReference type="OMA" id="MHQKLEN"/>
<dbReference type="OrthoDB" id="2016041at2759"/>
<dbReference type="Proteomes" id="UP000000763">
    <property type="component" value="Chromosome 10"/>
</dbReference>
<dbReference type="Proteomes" id="UP000059680">
    <property type="component" value="Chromosome 10"/>
</dbReference>
<dbReference type="ExpressionAtlas" id="P07730">
    <property type="expression patterns" value="baseline and differential"/>
</dbReference>
<dbReference type="GO" id="GO:0045735">
    <property type="term" value="F:nutrient reservoir activity"/>
    <property type="evidence" value="ECO:0007669"/>
    <property type="project" value="UniProtKB-KW"/>
</dbReference>
<dbReference type="GO" id="GO:0048316">
    <property type="term" value="P:seed development"/>
    <property type="evidence" value="ECO:0007669"/>
    <property type="project" value="UniProtKB-ARBA"/>
</dbReference>
<dbReference type="CDD" id="cd02243">
    <property type="entry name" value="cupin_11S_legumin_C"/>
    <property type="match status" value="1"/>
</dbReference>
<dbReference type="CDD" id="cd02242">
    <property type="entry name" value="cupin_11S_legumin_N"/>
    <property type="match status" value="1"/>
</dbReference>
<dbReference type="FunFam" id="2.60.120.10:FF:000073">
    <property type="entry name" value="Glycinin G1"/>
    <property type="match status" value="1"/>
</dbReference>
<dbReference type="Gene3D" id="2.60.120.10">
    <property type="entry name" value="Jelly Rolls"/>
    <property type="match status" value="2"/>
</dbReference>
<dbReference type="InterPro" id="IPR022379">
    <property type="entry name" value="11S_seedstore_CS"/>
</dbReference>
<dbReference type="InterPro" id="IPR006044">
    <property type="entry name" value="11S_seedstore_pln"/>
</dbReference>
<dbReference type="InterPro" id="IPR006045">
    <property type="entry name" value="Cupin_1"/>
</dbReference>
<dbReference type="InterPro" id="IPR014710">
    <property type="entry name" value="RmlC-like_jellyroll"/>
</dbReference>
<dbReference type="InterPro" id="IPR011051">
    <property type="entry name" value="RmlC_Cupin_sf"/>
</dbReference>
<dbReference type="InterPro" id="IPR050253">
    <property type="entry name" value="Seed_Storage-Functional"/>
</dbReference>
<dbReference type="PANTHER" id="PTHR31189:SF35">
    <property type="entry name" value="12S SEED STORAGE PROTEIN CRB"/>
    <property type="match status" value="1"/>
</dbReference>
<dbReference type="PANTHER" id="PTHR31189">
    <property type="entry name" value="OS03G0336100 PROTEIN-RELATED"/>
    <property type="match status" value="1"/>
</dbReference>
<dbReference type="Pfam" id="PF00190">
    <property type="entry name" value="Cupin_1"/>
    <property type="match status" value="2"/>
</dbReference>
<dbReference type="PRINTS" id="PR00439">
    <property type="entry name" value="11SGLOBULIN"/>
</dbReference>
<dbReference type="SMART" id="SM00835">
    <property type="entry name" value="Cupin_1"/>
    <property type="match status" value="2"/>
</dbReference>
<dbReference type="SUPFAM" id="SSF51182">
    <property type="entry name" value="RmlC-like cupins"/>
    <property type="match status" value="1"/>
</dbReference>
<dbReference type="PROSITE" id="PS00305">
    <property type="entry name" value="11S_SEED_STORAGE"/>
    <property type="match status" value="1"/>
</dbReference>
<evidence type="ECO:0000250" key="1"/>
<evidence type="ECO:0000255" key="2"/>
<evidence type="ECO:0000256" key="3">
    <source>
        <dbReference type="SAM" id="MobiDB-lite"/>
    </source>
</evidence>
<evidence type="ECO:0000269" key="4">
    <source>
    </source>
</evidence>
<evidence type="ECO:0000269" key="5">
    <source ref="3"/>
</evidence>
<evidence type="ECO:0000305" key="6"/>
<sequence>MASINRPIVFFTVCLFLLCDGSLAQQLLGQSTSQWQSSRRGSPRGCRFDRLQAFEPIRSVRSQAGTTEFFDVSNELFQCTGVSVVRRVIEPRGLLLPHYTNGASLVYIIQGRGITGPTFPGCPETYQQQFQQSGQAQLTESQSQSHKFKDEHQKIHRFRQGDVIALPAGVAHWCYNDGEVPVVAIYVTDINNGANQLDPRQRDFLLAGNKRNPQAYRREVEEWSQNIFSGFSTELLSEAFGISNQVARQLQCQNDQRGEIVRVERGLSLLQPYASLQEQEQGQMQSREHYQEGGYQQSQYGSGCPNGLDETFCTMRVRQNIDNPNRADTYNPRAGRVTNLNSQNFPILNLVQMSAVKVNLYQNALLSPFWNINAHSIVYITQGRAQVQVVNNNGKTVFNGELRRGQLLIVPQHYVVVKKAQREGCAYIAFKTNPNSMVSHIAGKSSIFRALPTDVLANAYRISREEAQRLKHNRGDEFGAFTPLQYKSYQDVYNVAESS</sequence>